<accession>Q9MYY3</accession>
<proteinExistence type="evidence at transcript level"/>
<feature type="initiator methionine" description="Removed" evidence="3">
    <location>
        <position position="1"/>
    </location>
</feature>
<feature type="chain" id="PRO_0000191822" description="Vitamin K-dependent gamma-carboxylase">
    <location>
        <begin position="2"/>
        <end position="758"/>
    </location>
</feature>
<feature type="topological domain" description="Cytoplasmic" evidence="4">
    <location>
        <begin position="2"/>
        <end position="60"/>
    </location>
</feature>
<feature type="transmembrane region" description="Helical" evidence="4">
    <location>
        <begin position="61"/>
        <end position="81"/>
    </location>
</feature>
<feature type="topological domain" description="Lumenal" evidence="4">
    <location>
        <begin position="82"/>
        <end position="113"/>
    </location>
</feature>
<feature type="transmembrane region" description="Helical" evidence="4">
    <location>
        <begin position="114"/>
        <end position="134"/>
    </location>
</feature>
<feature type="topological domain" description="Cytoplasmic" evidence="4">
    <location>
        <begin position="135"/>
        <end position="136"/>
    </location>
</feature>
<feature type="transmembrane region" description="Helical" evidence="4">
    <location>
        <begin position="137"/>
        <end position="157"/>
    </location>
</feature>
<feature type="topological domain" description="Lumenal" evidence="4">
    <location>
        <begin position="158"/>
        <end position="292"/>
    </location>
</feature>
<feature type="transmembrane region" description="Helical" evidence="4">
    <location>
        <begin position="293"/>
        <end position="313"/>
    </location>
</feature>
<feature type="topological domain" description="Cytoplasmic" evidence="4">
    <location>
        <begin position="314"/>
        <end position="361"/>
    </location>
</feature>
<feature type="transmembrane region" description="Helical" evidence="4">
    <location>
        <begin position="362"/>
        <end position="382"/>
    </location>
</feature>
<feature type="topological domain" description="Lumenal" evidence="4">
    <location>
        <begin position="383"/>
        <end position="758"/>
    </location>
</feature>
<feature type="region of interest" description="Disordered" evidence="5">
    <location>
        <begin position="1"/>
        <end position="31"/>
    </location>
</feature>
<feature type="region of interest" description="Disordered" evidence="5">
    <location>
        <begin position="727"/>
        <end position="758"/>
    </location>
</feature>
<feature type="compositionally biased region" description="Basic and acidic residues" evidence="5">
    <location>
        <begin position="12"/>
        <end position="22"/>
    </location>
</feature>
<feature type="compositionally biased region" description="Low complexity" evidence="5">
    <location>
        <begin position="734"/>
        <end position="750"/>
    </location>
</feature>
<feature type="modified residue" description="N-acetylalanine" evidence="3">
    <location>
        <position position="2"/>
    </location>
</feature>
<feature type="disulfide bond" evidence="1">
    <location>
        <begin position="99"/>
        <end position="450"/>
    </location>
</feature>
<keyword id="KW-0007">Acetylation</keyword>
<keyword id="KW-1015">Disulfide bond</keyword>
<keyword id="KW-0256">Endoplasmic reticulum</keyword>
<keyword id="KW-0456">Lyase</keyword>
<keyword id="KW-0472">Membrane</keyword>
<keyword id="KW-1185">Reference proteome</keyword>
<keyword id="KW-0812">Transmembrane</keyword>
<keyword id="KW-1133">Transmembrane helix</keyword>
<dbReference type="EC" id="4.1.1.90" evidence="3"/>
<dbReference type="EMBL" id="AF278713">
    <property type="protein sequence ID" value="AAF82125.1"/>
    <property type="molecule type" value="mRNA"/>
</dbReference>
<dbReference type="RefSeq" id="XP_022411837.1">
    <property type="nucleotide sequence ID" value="XM_022556129.1"/>
</dbReference>
<dbReference type="FunCoup" id="Q9MYY3">
    <property type="interactions" value="665"/>
</dbReference>
<dbReference type="STRING" id="9749.Q9MYY3"/>
<dbReference type="GeneID" id="111165448"/>
<dbReference type="InParanoid" id="Q9MYY3"/>
<dbReference type="Proteomes" id="UP000248483">
    <property type="component" value="Unplaced"/>
</dbReference>
<dbReference type="GO" id="GO:0005788">
    <property type="term" value="C:endoplasmic reticulum lumen"/>
    <property type="evidence" value="ECO:0007669"/>
    <property type="project" value="Ensembl"/>
</dbReference>
<dbReference type="GO" id="GO:0005789">
    <property type="term" value="C:endoplasmic reticulum membrane"/>
    <property type="evidence" value="ECO:0007669"/>
    <property type="project" value="UniProtKB-SubCell"/>
</dbReference>
<dbReference type="GO" id="GO:0008488">
    <property type="term" value="F:gamma-glutamyl carboxylase activity"/>
    <property type="evidence" value="ECO:0007669"/>
    <property type="project" value="UniProtKB-EC"/>
</dbReference>
<dbReference type="GO" id="GO:0019842">
    <property type="term" value="F:vitamin binding"/>
    <property type="evidence" value="ECO:0007669"/>
    <property type="project" value="TreeGrafter"/>
</dbReference>
<dbReference type="GO" id="GO:1903011">
    <property type="term" value="P:negative regulation of bone development"/>
    <property type="evidence" value="ECO:0007669"/>
    <property type="project" value="Ensembl"/>
</dbReference>
<dbReference type="GO" id="GO:0046929">
    <property type="term" value="P:negative regulation of neurotransmitter secretion"/>
    <property type="evidence" value="ECO:0007669"/>
    <property type="project" value="Ensembl"/>
</dbReference>
<dbReference type="GO" id="GO:2000225">
    <property type="term" value="P:negative regulation of testosterone biosynthetic process"/>
    <property type="evidence" value="ECO:0007669"/>
    <property type="project" value="Ensembl"/>
</dbReference>
<dbReference type="GO" id="GO:0051604">
    <property type="term" value="P:protein maturation"/>
    <property type="evidence" value="ECO:0007669"/>
    <property type="project" value="Ensembl"/>
</dbReference>
<dbReference type="GO" id="GO:0042373">
    <property type="term" value="P:vitamin K metabolic process"/>
    <property type="evidence" value="ECO:0007669"/>
    <property type="project" value="Ensembl"/>
</dbReference>
<dbReference type="InterPro" id="IPR011020">
    <property type="entry name" value="HTTM-like"/>
</dbReference>
<dbReference type="InterPro" id="IPR053934">
    <property type="entry name" value="HTTM_dom"/>
</dbReference>
<dbReference type="InterPro" id="IPR011051">
    <property type="entry name" value="RmlC_Cupin_sf"/>
</dbReference>
<dbReference type="InterPro" id="IPR007782">
    <property type="entry name" value="VKG_COase"/>
</dbReference>
<dbReference type="InterPro" id="IPR053935">
    <property type="entry name" value="VKGC_lumenal_dom"/>
</dbReference>
<dbReference type="PANTHER" id="PTHR12639">
    <property type="entry name" value="VITAMIN K-DEPENDENT GAMMA-CARBOXYLASE"/>
    <property type="match status" value="1"/>
</dbReference>
<dbReference type="PANTHER" id="PTHR12639:SF6">
    <property type="entry name" value="VITAMIN K-DEPENDENT GAMMA-CARBOXYLASE"/>
    <property type="match status" value="1"/>
</dbReference>
<dbReference type="Pfam" id="PF05090">
    <property type="entry name" value="HTTM"/>
    <property type="match status" value="1"/>
</dbReference>
<dbReference type="Pfam" id="PF22777">
    <property type="entry name" value="VKGC_lumenal_dom"/>
    <property type="match status" value="1"/>
</dbReference>
<dbReference type="SMART" id="SM00752">
    <property type="entry name" value="HTTM"/>
    <property type="match status" value="1"/>
</dbReference>
<dbReference type="SUPFAM" id="SSF51182">
    <property type="entry name" value="RmlC-like cupins"/>
    <property type="match status" value="1"/>
</dbReference>
<organism>
    <name type="scientific">Delphinapterus leucas</name>
    <name type="common">Beluga whale</name>
    <dbReference type="NCBI Taxonomy" id="9749"/>
    <lineage>
        <taxon>Eukaryota</taxon>
        <taxon>Metazoa</taxon>
        <taxon>Chordata</taxon>
        <taxon>Craniata</taxon>
        <taxon>Vertebrata</taxon>
        <taxon>Euteleostomi</taxon>
        <taxon>Mammalia</taxon>
        <taxon>Eutheria</taxon>
        <taxon>Laurasiatheria</taxon>
        <taxon>Artiodactyla</taxon>
        <taxon>Whippomorpha</taxon>
        <taxon>Cetacea</taxon>
        <taxon>Odontoceti</taxon>
        <taxon>Monodontidae</taxon>
        <taxon>Delphinapterus</taxon>
    </lineage>
</organism>
<reference key="1">
    <citation type="journal article" date="2000" name="J. Biol. Chem.">
        <title>A conserved motif within the vitamin K-dependent carboxylase gene is widely distributed across animal phyla.</title>
        <authorList>
            <person name="Begley G.S."/>
            <person name="Furie B.C."/>
            <person name="Czerwiec E."/>
            <person name="Taylor K.L."/>
            <person name="Furie G.L."/>
            <person name="Bronstein L."/>
            <person name="Stenflo J."/>
            <person name="Furie B."/>
        </authorList>
    </citation>
    <scope>NUCLEOTIDE SEQUENCE [MRNA]</scope>
    <source>
        <tissue>Liver</tissue>
    </source>
</reference>
<name>VKGC_DELLE</name>
<gene>
    <name type="primary">GGCX</name>
</gene>
<comment type="function">
    <text evidence="3">Mediates the vitamin K-dependent carboxylation of glutamate residues to calcium-binding gamma-carboxyglutamate (Gla) residues with the concomitant conversion of the reduced hydroquinone form of vitamin K to vitamin K epoxide. Catalyzes gamma-carboxylation of various proteins, such as blood coagulation factors (F2, F7, F9 and F10), osteocalcin (BGLAP) or matrix Gla protein (MGP).</text>
</comment>
<comment type="catalytic activity">
    <reaction evidence="3">
        <text>4-carboxy-L-glutamyl-[protein] + 2,3-epoxyphylloquinone + H2O + H(+) = phylloquinol + L-glutamyl-[protein] + CO2 + O2</text>
        <dbReference type="Rhea" id="RHEA:45140"/>
        <dbReference type="Rhea" id="RHEA-COMP:10208"/>
        <dbReference type="Rhea" id="RHEA-COMP:11094"/>
        <dbReference type="ChEBI" id="CHEBI:15377"/>
        <dbReference type="ChEBI" id="CHEBI:15378"/>
        <dbReference type="ChEBI" id="CHEBI:15379"/>
        <dbReference type="ChEBI" id="CHEBI:15759"/>
        <dbReference type="ChEBI" id="CHEBI:16526"/>
        <dbReference type="ChEBI" id="CHEBI:28433"/>
        <dbReference type="ChEBI" id="CHEBI:29973"/>
        <dbReference type="ChEBI" id="CHEBI:84990"/>
        <dbReference type="EC" id="4.1.1.90"/>
    </reaction>
    <physiologicalReaction direction="right-to-left" evidence="3">
        <dbReference type="Rhea" id="RHEA:45142"/>
    </physiologicalReaction>
</comment>
<comment type="subunit">
    <text evidence="2 3">Monomer (By similarity). May interact with CALU (By similarity).</text>
</comment>
<comment type="subcellular location">
    <subcellularLocation>
        <location evidence="3">Endoplasmic reticulum membrane</location>
        <topology evidence="3">Multi-pass membrane protein</topology>
    </subcellularLocation>
</comment>
<comment type="miscellaneous">
    <text>The vitamin K-dependent protein substrates of carboxylase have usually a propeptide that binds to a high-affinity site on the carboxylase. CO(2), O(2) and reduced vitamin K are cosubstrates.</text>
</comment>
<comment type="similarity">
    <text evidence="6">Belongs to the vitamin K-dependent gamma-carboxylase family.</text>
</comment>
<protein>
    <recommendedName>
        <fullName>Vitamin K-dependent gamma-carboxylase</fullName>
        <ecNumber evidence="3">4.1.1.90</ecNumber>
    </recommendedName>
    <alternativeName>
        <fullName>Gamma-glutamyl carboxylase</fullName>
    </alternativeName>
    <alternativeName>
        <fullName>Peptidyl-glutamate 4-carboxylase</fullName>
    </alternativeName>
    <alternativeName>
        <fullName>Vitamin K gamma glutamyl carboxylase</fullName>
    </alternativeName>
</protein>
<evidence type="ECO:0000250" key="1"/>
<evidence type="ECO:0000250" key="2">
    <source>
        <dbReference type="UniProtKB" id="O88496"/>
    </source>
</evidence>
<evidence type="ECO:0000250" key="3">
    <source>
        <dbReference type="UniProtKB" id="P38435"/>
    </source>
</evidence>
<evidence type="ECO:0000255" key="4"/>
<evidence type="ECO:0000256" key="5">
    <source>
        <dbReference type="SAM" id="MobiDB-lite"/>
    </source>
</evidence>
<evidence type="ECO:0000305" key="6"/>
<sequence>MAVSARSARSPPDSDKVQKDKAGQTSGRRQGSRMGKLLGFEWTDVSSWGKLVTLLNRPTDPASLAVFRFLFGLMMVLDIPQERGLSSLDRRYLDGLEVCRFPLLDALQPLPLDWMYLVYTIMFLGALGMMLGLRYRISCVLFLLPYWYVFLLDKTSWNNHSYLYGLLAFQLTFMDANRYWSVDGLLSARKRNAHVPLWNYAVLRGQIFIVYFIAGVKKLDADWVEGYSMEYLSRHWLFSPFKFVLSEEMTSLLVVHWCGLLLDLSAGFLLFFDASRSIGLLFVSYFHCMNSQLFSIGMFPYVMLASSPLFCSPEWPRKLVAHCPKRLQELLPLRTAPQPSASCVYKRSRAKGGQKPGLRHRLGAAFTLLYLLEQLFLPYSHFLTQGYNNWTNGLYGYSWDMMVHSRSHQHVKITYRDGRTGELGYLNPGVFTQSRRWKDHADMLKQYATCLSRLLPKYNVTEPQIYFDIWVSINDRFQQRIFDPRVDIVQATWSPFQRTPWLQPLLMDLSPWRTKLQEIKSSLDNHTEVVFIADFPGLHLENFVSEDLGNTSIQLLQGEVTVELVAEQKNQTLQEGEKMQLPAGEYHKVYTMSPSPSCYMYIYVNTTELALEQDLAYLQELKEKVENGSETEPLPPELQPLLEGEVKGGPEPTPLVQTFLRRQQRLQEIERRRNAPFHERLLRFLLRKLYVFRRSFLMTCISLRNLVLGRPSLEQLAQEVTYANLRPFEPVGEPSPSNTDSSNPNPSEPNADAVHSEF</sequence>